<comment type="similarity">
    <text evidence="1">Belongs to the bacterial ribosomal protein bL35 family.</text>
</comment>
<protein>
    <recommendedName>
        <fullName evidence="1">Large ribosomal subunit protein bL35</fullName>
    </recommendedName>
    <alternativeName>
        <fullName evidence="3">50S ribosomal protein L35</fullName>
    </alternativeName>
</protein>
<accession>A6U2E7</accession>
<organism>
    <name type="scientific">Staphylococcus aureus (strain JH1)</name>
    <dbReference type="NCBI Taxonomy" id="359787"/>
    <lineage>
        <taxon>Bacteria</taxon>
        <taxon>Bacillati</taxon>
        <taxon>Bacillota</taxon>
        <taxon>Bacilli</taxon>
        <taxon>Bacillales</taxon>
        <taxon>Staphylococcaceae</taxon>
        <taxon>Staphylococcus</taxon>
    </lineage>
</organism>
<proteinExistence type="inferred from homology"/>
<gene>
    <name evidence="1" type="primary">rpmI</name>
    <name type="ordered locus">SaurJH1_1771</name>
</gene>
<evidence type="ECO:0000255" key="1">
    <source>
        <dbReference type="HAMAP-Rule" id="MF_00514"/>
    </source>
</evidence>
<evidence type="ECO:0000256" key="2">
    <source>
        <dbReference type="SAM" id="MobiDB-lite"/>
    </source>
</evidence>
<evidence type="ECO:0000305" key="3"/>
<keyword id="KW-0687">Ribonucleoprotein</keyword>
<keyword id="KW-0689">Ribosomal protein</keyword>
<dbReference type="EMBL" id="CP000736">
    <property type="protein sequence ID" value="ABR52615.1"/>
    <property type="molecule type" value="Genomic_DNA"/>
</dbReference>
<dbReference type="SMR" id="A6U2E7"/>
<dbReference type="KEGG" id="sah:SaurJH1_1771"/>
<dbReference type="HOGENOM" id="CLU_169643_3_0_9"/>
<dbReference type="GO" id="GO:0022625">
    <property type="term" value="C:cytosolic large ribosomal subunit"/>
    <property type="evidence" value="ECO:0007669"/>
    <property type="project" value="TreeGrafter"/>
</dbReference>
<dbReference type="GO" id="GO:0003735">
    <property type="term" value="F:structural constituent of ribosome"/>
    <property type="evidence" value="ECO:0007669"/>
    <property type="project" value="InterPro"/>
</dbReference>
<dbReference type="GO" id="GO:0006412">
    <property type="term" value="P:translation"/>
    <property type="evidence" value="ECO:0007669"/>
    <property type="project" value="UniProtKB-UniRule"/>
</dbReference>
<dbReference type="FunFam" id="4.10.410.60:FF:000001">
    <property type="entry name" value="50S ribosomal protein L35"/>
    <property type="match status" value="1"/>
</dbReference>
<dbReference type="Gene3D" id="4.10.410.60">
    <property type="match status" value="1"/>
</dbReference>
<dbReference type="HAMAP" id="MF_00514">
    <property type="entry name" value="Ribosomal_bL35"/>
    <property type="match status" value="1"/>
</dbReference>
<dbReference type="InterPro" id="IPR001706">
    <property type="entry name" value="Ribosomal_bL35"/>
</dbReference>
<dbReference type="InterPro" id="IPR021137">
    <property type="entry name" value="Ribosomal_bL35-like"/>
</dbReference>
<dbReference type="InterPro" id="IPR018265">
    <property type="entry name" value="Ribosomal_bL35_CS"/>
</dbReference>
<dbReference type="InterPro" id="IPR037229">
    <property type="entry name" value="Ribosomal_bL35_sf"/>
</dbReference>
<dbReference type="NCBIfam" id="TIGR00001">
    <property type="entry name" value="rpmI_bact"/>
    <property type="match status" value="1"/>
</dbReference>
<dbReference type="PANTHER" id="PTHR33343">
    <property type="entry name" value="54S RIBOSOMAL PROTEIN BL35M"/>
    <property type="match status" value="1"/>
</dbReference>
<dbReference type="PANTHER" id="PTHR33343:SF1">
    <property type="entry name" value="LARGE RIBOSOMAL SUBUNIT PROTEIN BL35M"/>
    <property type="match status" value="1"/>
</dbReference>
<dbReference type="Pfam" id="PF01632">
    <property type="entry name" value="Ribosomal_L35p"/>
    <property type="match status" value="1"/>
</dbReference>
<dbReference type="PRINTS" id="PR00064">
    <property type="entry name" value="RIBOSOMALL35"/>
</dbReference>
<dbReference type="SUPFAM" id="SSF143034">
    <property type="entry name" value="L35p-like"/>
    <property type="match status" value="1"/>
</dbReference>
<dbReference type="PROSITE" id="PS00936">
    <property type="entry name" value="RIBOSOMAL_L35"/>
    <property type="match status" value="1"/>
</dbReference>
<name>RL35_STAA2</name>
<sequence>MPKMKTHRGAAKRVKRTASGQLKRSRAFTSHLFANKSTKQKRQLRKARLVSKSDMKRVKQLLAYKK</sequence>
<feature type="chain" id="PRO_1000081631" description="Large ribosomal subunit protein bL35">
    <location>
        <begin position="1"/>
        <end position="66"/>
    </location>
</feature>
<feature type="region of interest" description="Disordered" evidence="2">
    <location>
        <begin position="1"/>
        <end position="49"/>
    </location>
</feature>
<feature type="compositionally biased region" description="Basic residues" evidence="2">
    <location>
        <begin position="1"/>
        <end position="16"/>
    </location>
</feature>
<feature type="compositionally biased region" description="Basic residues" evidence="2">
    <location>
        <begin position="38"/>
        <end position="49"/>
    </location>
</feature>
<reference key="1">
    <citation type="submission" date="2007-06" db="EMBL/GenBank/DDBJ databases">
        <title>Complete sequence of chromosome of Staphylococcus aureus subsp. aureus JH1.</title>
        <authorList>
            <consortium name="US DOE Joint Genome Institute"/>
            <person name="Copeland A."/>
            <person name="Lucas S."/>
            <person name="Lapidus A."/>
            <person name="Barry K."/>
            <person name="Detter J.C."/>
            <person name="Glavina del Rio T."/>
            <person name="Hammon N."/>
            <person name="Israni S."/>
            <person name="Dalin E."/>
            <person name="Tice H."/>
            <person name="Pitluck S."/>
            <person name="Chain P."/>
            <person name="Malfatti S."/>
            <person name="Shin M."/>
            <person name="Vergez L."/>
            <person name="Schmutz J."/>
            <person name="Larimer F."/>
            <person name="Land M."/>
            <person name="Hauser L."/>
            <person name="Kyrpides N."/>
            <person name="Ivanova N."/>
            <person name="Tomasz A."/>
            <person name="Richardson P."/>
        </authorList>
    </citation>
    <scope>NUCLEOTIDE SEQUENCE [LARGE SCALE GENOMIC DNA]</scope>
    <source>
        <strain>JH1</strain>
    </source>
</reference>